<proteinExistence type="inferred from homology"/>
<dbReference type="EMBL" id="CP000826">
    <property type="protein sequence ID" value="ABV39263.1"/>
    <property type="molecule type" value="Genomic_DNA"/>
</dbReference>
<dbReference type="SMR" id="A8G823"/>
<dbReference type="STRING" id="399741.Spro_0153"/>
<dbReference type="KEGG" id="spe:Spro_0153"/>
<dbReference type="eggNOG" id="COG1301">
    <property type="taxonomic scope" value="Bacteria"/>
</dbReference>
<dbReference type="HOGENOM" id="CLU_019375_7_0_6"/>
<dbReference type="OrthoDB" id="9766690at2"/>
<dbReference type="GO" id="GO:0005886">
    <property type="term" value="C:plasma membrane"/>
    <property type="evidence" value="ECO:0007669"/>
    <property type="project" value="UniProtKB-SubCell"/>
</dbReference>
<dbReference type="GO" id="GO:0015138">
    <property type="term" value="F:fumarate transmembrane transporter activity"/>
    <property type="evidence" value="ECO:0007669"/>
    <property type="project" value="TreeGrafter"/>
</dbReference>
<dbReference type="GO" id="GO:0015366">
    <property type="term" value="F:malate:proton symporter activity"/>
    <property type="evidence" value="ECO:0007669"/>
    <property type="project" value="TreeGrafter"/>
</dbReference>
<dbReference type="GO" id="GO:0015141">
    <property type="term" value="F:succinate transmembrane transporter activity"/>
    <property type="evidence" value="ECO:0007669"/>
    <property type="project" value="TreeGrafter"/>
</dbReference>
<dbReference type="GO" id="GO:0070778">
    <property type="term" value="P:L-aspartate transmembrane transport"/>
    <property type="evidence" value="ECO:0007669"/>
    <property type="project" value="TreeGrafter"/>
</dbReference>
<dbReference type="FunFam" id="1.10.3860.10:FF:000001">
    <property type="entry name" value="C4-dicarboxylate transport protein"/>
    <property type="match status" value="1"/>
</dbReference>
<dbReference type="Gene3D" id="1.10.3860.10">
    <property type="entry name" value="Sodium:dicarboxylate symporter"/>
    <property type="match status" value="1"/>
</dbReference>
<dbReference type="HAMAP" id="MF_01300">
    <property type="entry name" value="C4_dicarb_transport"/>
    <property type="match status" value="1"/>
</dbReference>
<dbReference type="InterPro" id="IPR023954">
    <property type="entry name" value="C4_dicarb_transport"/>
</dbReference>
<dbReference type="InterPro" id="IPR001991">
    <property type="entry name" value="Na-dicarboxylate_symporter"/>
</dbReference>
<dbReference type="InterPro" id="IPR018107">
    <property type="entry name" value="Na-dicarboxylate_symporter_CS"/>
</dbReference>
<dbReference type="InterPro" id="IPR036458">
    <property type="entry name" value="Na:dicarbo_symporter_sf"/>
</dbReference>
<dbReference type="NCBIfam" id="NF002461">
    <property type="entry name" value="PRK01663.1"/>
    <property type="match status" value="1"/>
</dbReference>
<dbReference type="NCBIfam" id="NF009587">
    <property type="entry name" value="PRK13027.1"/>
    <property type="match status" value="1"/>
</dbReference>
<dbReference type="PANTHER" id="PTHR42865:SF1">
    <property type="entry name" value="AEROBIC C4-DICARBOXYLATE TRANSPORT PROTEIN"/>
    <property type="match status" value="1"/>
</dbReference>
<dbReference type="PANTHER" id="PTHR42865">
    <property type="entry name" value="PROTON/GLUTAMATE-ASPARTATE SYMPORTER"/>
    <property type="match status" value="1"/>
</dbReference>
<dbReference type="Pfam" id="PF00375">
    <property type="entry name" value="SDF"/>
    <property type="match status" value="1"/>
</dbReference>
<dbReference type="PRINTS" id="PR00173">
    <property type="entry name" value="EDTRNSPORT"/>
</dbReference>
<dbReference type="SUPFAM" id="SSF118215">
    <property type="entry name" value="Proton glutamate symport protein"/>
    <property type="match status" value="1"/>
</dbReference>
<dbReference type="PROSITE" id="PS00713">
    <property type="entry name" value="NA_DICARBOXYL_SYMP_1"/>
    <property type="match status" value="1"/>
</dbReference>
<dbReference type="PROSITE" id="PS00714">
    <property type="entry name" value="NA_DICARBOXYL_SYMP_2"/>
    <property type="match status" value="1"/>
</dbReference>
<keyword id="KW-0997">Cell inner membrane</keyword>
<keyword id="KW-1003">Cell membrane</keyword>
<keyword id="KW-0472">Membrane</keyword>
<keyword id="KW-0769">Symport</keyword>
<keyword id="KW-0812">Transmembrane</keyword>
<keyword id="KW-1133">Transmembrane helix</keyword>
<keyword id="KW-0813">Transport</keyword>
<comment type="function">
    <text evidence="1">Responsible for the transport of dicarboxylates such as succinate, fumarate, and malate from the periplasm across the membrane.</text>
</comment>
<comment type="subcellular location">
    <subcellularLocation>
        <location evidence="1">Cell inner membrane</location>
        <topology evidence="1">Multi-pass membrane protein</topology>
    </subcellularLocation>
</comment>
<comment type="similarity">
    <text evidence="1">Belongs to the dicarboxylate/amino acid:cation symporter (DAACS) (TC 2.A.23) family.</text>
</comment>
<sequence length="429" mass="45386">MKLTIFKSLYFQVLTAITLGVLLGHFYPDIGAQMKPLGDGFVKLIKMIIAPVIFCTVVTGIAGMESMKAVGRTGAIALLYFEIVSTIALLIGLLIVNLVQPGAGMNIDPGTLDAKAVAVYAEQAQQQGIVPFLLDIIPGSVIGAFASGNILQVLLFAVLFGFALHRLGDKGQLIFNVIESFSRVIFGIINMIMRLAPLGAFGAMAFTIGKYGVGSLLQLGQLIACFYLTCILFVVVVLGSIARANGFSIFKFVRYIKEELLIVLGTSSSESVLPRMLDKMEKLGCKKSVVGLVIPTGYSFNLDGTSIYLTMAAVFIAQATNTHMDVIHQVTLLVVLLLSSKGAAGVTGSGFIVLAATISAVGHLPLAGLALILGIDRFMSEARALTNLVGNGVATVVVAKWCKQLDEKQLHDTLSNKPGSGADKTLPSA</sequence>
<protein>
    <recommendedName>
        <fullName evidence="1">C4-dicarboxylate transport protein</fullName>
    </recommendedName>
</protein>
<reference key="1">
    <citation type="submission" date="2007-09" db="EMBL/GenBank/DDBJ databases">
        <title>Complete sequence of chromosome of Serratia proteamaculans 568.</title>
        <authorList>
            <consortium name="US DOE Joint Genome Institute"/>
            <person name="Copeland A."/>
            <person name="Lucas S."/>
            <person name="Lapidus A."/>
            <person name="Barry K."/>
            <person name="Glavina del Rio T."/>
            <person name="Dalin E."/>
            <person name="Tice H."/>
            <person name="Pitluck S."/>
            <person name="Chain P."/>
            <person name="Malfatti S."/>
            <person name="Shin M."/>
            <person name="Vergez L."/>
            <person name="Schmutz J."/>
            <person name="Larimer F."/>
            <person name="Land M."/>
            <person name="Hauser L."/>
            <person name="Kyrpides N."/>
            <person name="Kim E."/>
            <person name="Taghavi S."/>
            <person name="Newman L."/>
            <person name="Vangronsveld J."/>
            <person name="van der Lelie D."/>
            <person name="Richardson P."/>
        </authorList>
    </citation>
    <scope>NUCLEOTIDE SEQUENCE [LARGE SCALE GENOMIC DNA]</scope>
    <source>
        <strain>568</strain>
    </source>
</reference>
<evidence type="ECO:0000255" key="1">
    <source>
        <dbReference type="HAMAP-Rule" id="MF_01300"/>
    </source>
</evidence>
<organism>
    <name type="scientific">Serratia proteamaculans (strain 568)</name>
    <dbReference type="NCBI Taxonomy" id="399741"/>
    <lineage>
        <taxon>Bacteria</taxon>
        <taxon>Pseudomonadati</taxon>
        <taxon>Pseudomonadota</taxon>
        <taxon>Gammaproteobacteria</taxon>
        <taxon>Enterobacterales</taxon>
        <taxon>Yersiniaceae</taxon>
        <taxon>Serratia</taxon>
    </lineage>
</organism>
<gene>
    <name evidence="1" type="primary">dctA</name>
    <name type="ordered locus">Spro_0153</name>
</gene>
<name>DCTA_SERP5</name>
<feature type="chain" id="PRO_1000067464" description="C4-dicarboxylate transport protein">
    <location>
        <begin position="1"/>
        <end position="429"/>
    </location>
</feature>
<feature type="transmembrane region" description="Helical" evidence="1">
    <location>
        <begin position="3"/>
        <end position="23"/>
    </location>
</feature>
<feature type="transmembrane region" description="Helical" evidence="1">
    <location>
        <begin position="44"/>
        <end position="64"/>
    </location>
</feature>
<feature type="transmembrane region" description="Helical" evidence="1">
    <location>
        <begin position="76"/>
        <end position="96"/>
    </location>
</feature>
<feature type="transmembrane region" description="Helical" evidence="1">
    <location>
        <begin position="142"/>
        <end position="162"/>
    </location>
</feature>
<feature type="transmembrane region" description="Helical" evidence="1">
    <location>
        <begin position="184"/>
        <end position="204"/>
    </location>
</feature>
<feature type="transmembrane region" description="Helical" evidence="1">
    <location>
        <begin position="222"/>
        <end position="242"/>
    </location>
</feature>
<feature type="transmembrane region" description="Helical" evidence="1">
    <location>
        <begin position="326"/>
        <end position="346"/>
    </location>
</feature>
<feature type="transmembrane region" description="Helical" evidence="1">
    <location>
        <begin position="352"/>
        <end position="372"/>
    </location>
</feature>
<accession>A8G823</accession>